<keyword id="KW-0030">Aminoacyl-tRNA synthetase</keyword>
<keyword id="KW-0067">ATP-binding</keyword>
<keyword id="KW-0963">Cytoplasm</keyword>
<keyword id="KW-0436">Ligase</keyword>
<keyword id="KW-0460">Magnesium</keyword>
<keyword id="KW-0479">Metal-binding</keyword>
<keyword id="KW-0547">Nucleotide-binding</keyword>
<keyword id="KW-0648">Protein biosynthesis</keyword>
<keyword id="KW-1185">Reference proteome</keyword>
<dbReference type="EC" id="6.1.1.20"/>
<dbReference type="EMBL" id="AE003852">
    <property type="protein sequence ID" value="AAF94378.1"/>
    <property type="molecule type" value="Genomic_DNA"/>
</dbReference>
<dbReference type="PIR" id="C82225">
    <property type="entry name" value="C82225"/>
</dbReference>
<dbReference type="RefSeq" id="NP_230864.1">
    <property type="nucleotide sequence ID" value="NC_002505.1"/>
</dbReference>
<dbReference type="RefSeq" id="WP_001164219.1">
    <property type="nucleotide sequence ID" value="NZ_LT906614.1"/>
</dbReference>
<dbReference type="SMR" id="Q9KSN7"/>
<dbReference type="STRING" id="243277.VC_1219"/>
<dbReference type="DNASU" id="2614656"/>
<dbReference type="EnsemblBacteria" id="AAF94378">
    <property type="protein sequence ID" value="AAF94378"/>
    <property type="gene ID" value="VC_1219"/>
</dbReference>
<dbReference type="KEGG" id="vch:VC_1219"/>
<dbReference type="PATRIC" id="fig|243277.26.peg.1166"/>
<dbReference type="eggNOG" id="COG0016">
    <property type="taxonomic scope" value="Bacteria"/>
</dbReference>
<dbReference type="HOGENOM" id="CLU_025086_0_1_6"/>
<dbReference type="Proteomes" id="UP000000584">
    <property type="component" value="Chromosome 1"/>
</dbReference>
<dbReference type="GO" id="GO:0005737">
    <property type="term" value="C:cytoplasm"/>
    <property type="evidence" value="ECO:0000318"/>
    <property type="project" value="GO_Central"/>
</dbReference>
<dbReference type="GO" id="GO:0005524">
    <property type="term" value="F:ATP binding"/>
    <property type="evidence" value="ECO:0007669"/>
    <property type="project" value="UniProtKB-UniRule"/>
</dbReference>
<dbReference type="GO" id="GO:0000287">
    <property type="term" value="F:magnesium ion binding"/>
    <property type="evidence" value="ECO:0007669"/>
    <property type="project" value="UniProtKB-UniRule"/>
</dbReference>
<dbReference type="GO" id="GO:0004826">
    <property type="term" value="F:phenylalanine-tRNA ligase activity"/>
    <property type="evidence" value="ECO:0000318"/>
    <property type="project" value="GO_Central"/>
</dbReference>
<dbReference type="GO" id="GO:0000049">
    <property type="term" value="F:tRNA binding"/>
    <property type="evidence" value="ECO:0007669"/>
    <property type="project" value="InterPro"/>
</dbReference>
<dbReference type="GO" id="GO:0006432">
    <property type="term" value="P:phenylalanyl-tRNA aminoacylation"/>
    <property type="evidence" value="ECO:0000318"/>
    <property type="project" value="GO_Central"/>
</dbReference>
<dbReference type="CDD" id="cd00496">
    <property type="entry name" value="PheRS_alpha_core"/>
    <property type="match status" value="1"/>
</dbReference>
<dbReference type="FunFam" id="3.30.930.10:FF:000003">
    <property type="entry name" value="Phenylalanine--tRNA ligase alpha subunit"/>
    <property type="match status" value="1"/>
</dbReference>
<dbReference type="Gene3D" id="3.30.930.10">
    <property type="entry name" value="Bira Bifunctional Protein, Domain 2"/>
    <property type="match status" value="1"/>
</dbReference>
<dbReference type="HAMAP" id="MF_00281">
    <property type="entry name" value="Phe_tRNA_synth_alpha1"/>
    <property type="match status" value="1"/>
</dbReference>
<dbReference type="InterPro" id="IPR006195">
    <property type="entry name" value="aa-tRNA-synth_II"/>
</dbReference>
<dbReference type="InterPro" id="IPR045864">
    <property type="entry name" value="aa-tRNA-synth_II/BPL/LPL"/>
</dbReference>
<dbReference type="InterPro" id="IPR004529">
    <property type="entry name" value="Phe-tRNA-synth_IIc_asu"/>
</dbReference>
<dbReference type="InterPro" id="IPR004188">
    <property type="entry name" value="Phe-tRNA_ligase_II_N"/>
</dbReference>
<dbReference type="InterPro" id="IPR022911">
    <property type="entry name" value="Phe_tRNA_ligase_alpha1_bac"/>
</dbReference>
<dbReference type="InterPro" id="IPR002319">
    <property type="entry name" value="Phenylalanyl-tRNA_Synthase"/>
</dbReference>
<dbReference type="InterPro" id="IPR010978">
    <property type="entry name" value="tRNA-bd_arm"/>
</dbReference>
<dbReference type="NCBIfam" id="TIGR00468">
    <property type="entry name" value="pheS"/>
    <property type="match status" value="1"/>
</dbReference>
<dbReference type="PANTHER" id="PTHR11538:SF41">
    <property type="entry name" value="PHENYLALANINE--TRNA LIGASE, MITOCHONDRIAL"/>
    <property type="match status" value="1"/>
</dbReference>
<dbReference type="PANTHER" id="PTHR11538">
    <property type="entry name" value="PHENYLALANYL-TRNA SYNTHETASE"/>
    <property type="match status" value="1"/>
</dbReference>
<dbReference type="Pfam" id="PF02912">
    <property type="entry name" value="Phe_tRNA-synt_N"/>
    <property type="match status" value="1"/>
</dbReference>
<dbReference type="Pfam" id="PF01409">
    <property type="entry name" value="tRNA-synt_2d"/>
    <property type="match status" value="1"/>
</dbReference>
<dbReference type="SUPFAM" id="SSF55681">
    <property type="entry name" value="Class II aaRS and biotin synthetases"/>
    <property type="match status" value="1"/>
</dbReference>
<dbReference type="SUPFAM" id="SSF46589">
    <property type="entry name" value="tRNA-binding arm"/>
    <property type="match status" value="1"/>
</dbReference>
<dbReference type="PROSITE" id="PS50862">
    <property type="entry name" value="AA_TRNA_LIGASE_II"/>
    <property type="match status" value="1"/>
</dbReference>
<name>SYFA_VIBCH</name>
<organism>
    <name type="scientific">Vibrio cholerae serotype O1 (strain ATCC 39315 / El Tor Inaba N16961)</name>
    <dbReference type="NCBI Taxonomy" id="243277"/>
    <lineage>
        <taxon>Bacteria</taxon>
        <taxon>Pseudomonadati</taxon>
        <taxon>Pseudomonadota</taxon>
        <taxon>Gammaproteobacteria</taxon>
        <taxon>Vibrionales</taxon>
        <taxon>Vibrionaceae</taxon>
        <taxon>Vibrio</taxon>
    </lineage>
</organism>
<feature type="chain" id="PRO_0000126791" description="Phenylalanine--tRNA ligase alpha subunit">
    <location>
        <begin position="1"/>
        <end position="327"/>
    </location>
</feature>
<feature type="binding site" evidence="1">
    <location>
        <position position="252"/>
    </location>
    <ligand>
        <name>Mg(2+)</name>
        <dbReference type="ChEBI" id="CHEBI:18420"/>
        <note>shared with beta subunit</note>
    </ligand>
</feature>
<accession>Q9KSN7</accession>
<protein>
    <recommendedName>
        <fullName>Phenylalanine--tRNA ligase alpha subunit</fullName>
        <ecNumber>6.1.1.20</ecNumber>
    </recommendedName>
    <alternativeName>
        <fullName>Phenylalanyl-tRNA synthetase alpha subunit</fullName>
        <shortName>PheRS</shortName>
    </alternativeName>
</protein>
<comment type="catalytic activity">
    <reaction>
        <text>tRNA(Phe) + L-phenylalanine + ATP = L-phenylalanyl-tRNA(Phe) + AMP + diphosphate + H(+)</text>
        <dbReference type="Rhea" id="RHEA:19413"/>
        <dbReference type="Rhea" id="RHEA-COMP:9668"/>
        <dbReference type="Rhea" id="RHEA-COMP:9699"/>
        <dbReference type="ChEBI" id="CHEBI:15378"/>
        <dbReference type="ChEBI" id="CHEBI:30616"/>
        <dbReference type="ChEBI" id="CHEBI:33019"/>
        <dbReference type="ChEBI" id="CHEBI:58095"/>
        <dbReference type="ChEBI" id="CHEBI:78442"/>
        <dbReference type="ChEBI" id="CHEBI:78531"/>
        <dbReference type="ChEBI" id="CHEBI:456215"/>
        <dbReference type="EC" id="6.1.1.20"/>
    </reaction>
</comment>
<comment type="cofactor">
    <cofactor evidence="1">
        <name>Mg(2+)</name>
        <dbReference type="ChEBI" id="CHEBI:18420"/>
    </cofactor>
    <text evidence="1">Binds 2 magnesium ions per tetramer.</text>
</comment>
<comment type="subunit">
    <text evidence="1">Tetramer of two alpha and two beta subunits.</text>
</comment>
<comment type="subcellular location">
    <subcellularLocation>
        <location evidence="1">Cytoplasm</location>
    </subcellularLocation>
</comment>
<comment type="similarity">
    <text evidence="2">Belongs to the class-II aminoacyl-tRNA synthetase family. Phe-tRNA synthetase alpha subunit type 1 subfamily.</text>
</comment>
<evidence type="ECO:0000250" key="1"/>
<evidence type="ECO:0000305" key="2"/>
<gene>
    <name type="primary">pheS</name>
    <name type="ordered locus">VC_1219</name>
</gene>
<reference key="1">
    <citation type="journal article" date="2000" name="Nature">
        <title>DNA sequence of both chromosomes of the cholera pathogen Vibrio cholerae.</title>
        <authorList>
            <person name="Heidelberg J.F."/>
            <person name="Eisen J.A."/>
            <person name="Nelson W.C."/>
            <person name="Clayton R.A."/>
            <person name="Gwinn M.L."/>
            <person name="Dodson R.J."/>
            <person name="Haft D.H."/>
            <person name="Hickey E.K."/>
            <person name="Peterson J.D."/>
            <person name="Umayam L.A."/>
            <person name="Gill S.R."/>
            <person name="Nelson K.E."/>
            <person name="Read T.D."/>
            <person name="Tettelin H."/>
            <person name="Richardson D.L."/>
            <person name="Ermolaeva M.D."/>
            <person name="Vamathevan J.J."/>
            <person name="Bass S."/>
            <person name="Qin H."/>
            <person name="Dragoi I."/>
            <person name="Sellers P."/>
            <person name="McDonald L.A."/>
            <person name="Utterback T.R."/>
            <person name="Fleischmann R.D."/>
            <person name="Nierman W.C."/>
            <person name="White O."/>
            <person name="Salzberg S.L."/>
            <person name="Smith H.O."/>
            <person name="Colwell R.R."/>
            <person name="Mekalanos J.J."/>
            <person name="Venter J.C."/>
            <person name="Fraser C.M."/>
        </authorList>
    </citation>
    <scope>NUCLEOTIDE SEQUENCE [LARGE SCALE GENOMIC DNA]</scope>
    <source>
        <strain>ATCC 39315 / El Tor Inaba N16961</strain>
    </source>
</reference>
<proteinExistence type="inferred from homology"/>
<sequence>MQHLQEIIANATSAINAAESLVALDEVRVQYLGKKGELTVQLQSLGKLPPEERRTAGQEINVAKEAVQKALAERKDALQSAELEAKLAAETIDVTLPGRRIENGGLHPVTRTIERIESFFGELGFTVESGPEIEDDFHNFDALNIAADHPARTDHDTFFFNPKLMLRTHTSGVQIRTLEERQPPLRFIAPGRVYRNDYDQTHTPMFHQVEGMLVDENVNFAQLKGILHDFLCNFFEEDLEVRFRPSYFPFTEPSAEVDVKGKNGKWLEVLGCGMVHPNVLRSVGIDPEKYSGFAFGMGVERLTMLRYGVNDLRAFFENDLRFLKQFK</sequence>